<protein>
    <recommendedName>
        <fullName evidence="1">Fumarate reductase subunit D</fullName>
    </recommendedName>
    <alternativeName>
        <fullName evidence="1">Quinol-fumarate reductase subunit D</fullName>
        <shortName evidence="1">QFR subunit D</shortName>
    </alternativeName>
</protein>
<reference key="1">
    <citation type="submission" date="2008-06" db="EMBL/GenBank/DDBJ databases">
        <title>Genome and proteome analysis of A. pleuropneumoniae serotype 7.</title>
        <authorList>
            <person name="Linke B."/>
            <person name="Buettner F."/>
            <person name="Martinez-Arias R."/>
            <person name="Goesmann A."/>
            <person name="Baltes N."/>
            <person name="Tegetmeyer H."/>
            <person name="Singh M."/>
            <person name="Gerlach G.F."/>
        </authorList>
    </citation>
    <scope>NUCLEOTIDE SEQUENCE [LARGE SCALE GENOMIC DNA]</scope>
    <source>
        <strain>AP76</strain>
    </source>
</reference>
<name>FRDD_ACTP7</name>
<feature type="chain" id="PRO_1000132393" description="Fumarate reductase subunit D">
    <location>
        <begin position="1"/>
        <end position="114"/>
    </location>
</feature>
<feature type="transmembrane region" description="Helical" evidence="1">
    <location>
        <begin position="27"/>
        <end position="47"/>
    </location>
</feature>
<feature type="transmembrane region" description="Helical" evidence="1">
    <location>
        <begin position="50"/>
        <end position="70"/>
    </location>
</feature>
<feature type="transmembrane region" description="Helical" evidence="1">
    <location>
        <begin position="94"/>
        <end position="114"/>
    </location>
</feature>
<accession>B3GYK8</accession>
<evidence type="ECO:0000255" key="1">
    <source>
        <dbReference type="HAMAP-Rule" id="MF_00709"/>
    </source>
</evidence>
<dbReference type="EMBL" id="CP001091">
    <property type="protein sequence ID" value="ACE62239.1"/>
    <property type="molecule type" value="Genomic_DNA"/>
</dbReference>
<dbReference type="RefSeq" id="WP_005619584.1">
    <property type="nucleotide sequence ID" value="NC_010939.1"/>
</dbReference>
<dbReference type="SMR" id="B3GYK8"/>
<dbReference type="GeneID" id="48599797"/>
<dbReference type="KEGG" id="apa:APP7_1587"/>
<dbReference type="HOGENOM" id="CLU_168367_0_0_6"/>
<dbReference type="Proteomes" id="UP000001226">
    <property type="component" value="Chromosome"/>
</dbReference>
<dbReference type="GO" id="GO:0045283">
    <property type="term" value="C:fumarate reductase complex"/>
    <property type="evidence" value="ECO:0007669"/>
    <property type="project" value="UniProtKB-UniRule"/>
</dbReference>
<dbReference type="GO" id="GO:0005886">
    <property type="term" value="C:plasma membrane"/>
    <property type="evidence" value="ECO:0007669"/>
    <property type="project" value="UniProtKB-SubCell"/>
</dbReference>
<dbReference type="GO" id="GO:0000104">
    <property type="term" value="F:succinate dehydrogenase activity"/>
    <property type="evidence" value="ECO:0007669"/>
    <property type="project" value="UniProtKB-UniRule"/>
</dbReference>
<dbReference type="GO" id="GO:0006106">
    <property type="term" value="P:fumarate metabolic process"/>
    <property type="evidence" value="ECO:0007669"/>
    <property type="project" value="InterPro"/>
</dbReference>
<dbReference type="CDD" id="cd00547">
    <property type="entry name" value="QFR_TypeD_subunitD"/>
    <property type="match status" value="1"/>
</dbReference>
<dbReference type="Gene3D" id="1.20.1300.10">
    <property type="entry name" value="Fumarate reductase/succinate dehydrogenase, transmembrane subunit"/>
    <property type="match status" value="1"/>
</dbReference>
<dbReference type="HAMAP" id="MF_00709">
    <property type="entry name" value="Fumarate_red_D"/>
    <property type="match status" value="1"/>
</dbReference>
<dbReference type="InterPro" id="IPR003418">
    <property type="entry name" value="Fumarate_red_D"/>
</dbReference>
<dbReference type="InterPro" id="IPR034804">
    <property type="entry name" value="SQR/QFR_C/D"/>
</dbReference>
<dbReference type="NCBIfam" id="NF003977">
    <property type="entry name" value="PRK05470.1-1"/>
    <property type="match status" value="1"/>
</dbReference>
<dbReference type="Pfam" id="PF02313">
    <property type="entry name" value="Fumarate_red_D"/>
    <property type="match status" value="1"/>
</dbReference>
<dbReference type="PIRSF" id="PIRSF000179">
    <property type="entry name" value="FrdD"/>
    <property type="match status" value="1"/>
</dbReference>
<dbReference type="SUPFAM" id="SSF81343">
    <property type="entry name" value="Fumarate reductase respiratory complex transmembrane subunits"/>
    <property type="match status" value="1"/>
</dbReference>
<keyword id="KW-0997">Cell inner membrane</keyword>
<keyword id="KW-1003">Cell membrane</keyword>
<keyword id="KW-0472">Membrane</keyword>
<keyword id="KW-0812">Transmembrane</keyword>
<keyword id="KW-1133">Transmembrane helix</keyword>
<proteinExistence type="inferred from homology"/>
<comment type="function">
    <text evidence="1">Anchors the catalytic components of the fumarate reductase complex to the cell membrane, binds quinones.</text>
</comment>
<comment type="subunit">
    <text evidence="1">Part of an enzyme complex containing four subunits: a flavoprotein (FrdA), an iron-sulfur protein (FrdB), and two hydrophobic anchor proteins (FrdC and FrdD).</text>
</comment>
<comment type="subcellular location">
    <subcellularLocation>
        <location evidence="1">Cell inner membrane</location>
        <topology evidence="1">Multi-pass membrane protein</topology>
    </subcellularLocation>
</comment>
<comment type="similarity">
    <text evidence="1">Belongs to the FrdD family.</text>
</comment>
<gene>
    <name evidence="1" type="primary">frdD</name>
    <name type="ordered locus">APP7_1587</name>
</gene>
<organism>
    <name type="scientific">Actinobacillus pleuropneumoniae serotype 7 (strain AP76)</name>
    <dbReference type="NCBI Taxonomy" id="537457"/>
    <lineage>
        <taxon>Bacteria</taxon>
        <taxon>Pseudomonadati</taxon>
        <taxon>Pseudomonadota</taxon>
        <taxon>Gammaproteobacteria</taxon>
        <taxon>Pasteurellales</taxon>
        <taxon>Pasteurellaceae</taxon>
        <taxon>Actinobacillus</taxon>
    </lineage>
</organism>
<sequence>MNKQDPKRSNEPPVWLMFSAGGTISAICFPVLLLILGVLLPLGLVPVENIVAFAHTWFGKLVILAVTIFPMWAGMHRVHHGLHDLKIHFPAGGWVFYGLSALYSVIVFFAVIAL</sequence>